<sequence>MFASRPVVHPLEVAAPAHPVQQPAPGVLMKDLPGMPGTPGGLGLRVLQLLFAAISLAVMSSTADFASVSAFCYLITTTVLQCVWSLTVAIVDIYALLVKRCLQNRRAVTLFSIGDGITWLVSFSGACAAAGIPVLIDADLIMCSENPCASFQTAVAMGFMCCFSLLPSFLLNFYSIASSHG</sequence>
<protein>
    <recommendedName>
        <fullName>CASP-like protein 5A1</fullName>
        <shortName>ZmCASPL5A1</shortName>
    </recommendedName>
</protein>
<organism>
    <name type="scientific">Zea mays</name>
    <name type="common">Maize</name>
    <dbReference type="NCBI Taxonomy" id="4577"/>
    <lineage>
        <taxon>Eukaryota</taxon>
        <taxon>Viridiplantae</taxon>
        <taxon>Streptophyta</taxon>
        <taxon>Embryophyta</taxon>
        <taxon>Tracheophyta</taxon>
        <taxon>Spermatophyta</taxon>
        <taxon>Magnoliopsida</taxon>
        <taxon>Liliopsida</taxon>
        <taxon>Poales</taxon>
        <taxon>Poaceae</taxon>
        <taxon>PACMAD clade</taxon>
        <taxon>Panicoideae</taxon>
        <taxon>Andropogonodae</taxon>
        <taxon>Andropogoneae</taxon>
        <taxon>Tripsacinae</taxon>
        <taxon>Zea</taxon>
    </lineage>
</organism>
<evidence type="ECO:0000250" key="1"/>
<evidence type="ECO:0000255" key="2"/>
<evidence type="ECO:0000305" key="3"/>
<keyword id="KW-1003">Cell membrane</keyword>
<keyword id="KW-0472">Membrane</keyword>
<keyword id="KW-1185">Reference proteome</keyword>
<keyword id="KW-0812">Transmembrane</keyword>
<keyword id="KW-1133">Transmembrane helix</keyword>
<dbReference type="EMBL" id="DR785323">
    <property type="status" value="NOT_ANNOTATED_CDS"/>
    <property type="molecule type" value="mRNA"/>
</dbReference>
<dbReference type="EMBL" id="DR785324">
    <property type="status" value="NOT_ANNOTATED_CDS"/>
    <property type="molecule type" value="mRNA"/>
</dbReference>
<dbReference type="InParanoid" id="P0DI67"/>
<dbReference type="Proteomes" id="UP000007305">
    <property type="component" value="Unplaced"/>
</dbReference>
<dbReference type="ExpressionAtlas" id="P0DI67">
    <property type="expression patterns" value="baseline and differential"/>
</dbReference>
<dbReference type="GO" id="GO:0016020">
    <property type="term" value="C:membrane"/>
    <property type="evidence" value="ECO:0000318"/>
    <property type="project" value="GO_Central"/>
</dbReference>
<dbReference type="GO" id="GO:0005886">
    <property type="term" value="C:plasma membrane"/>
    <property type="evidence" value="ECO:0007669"/>
    <property type="project" value="UniProtKB-SubCell"/>
</dbReference>
<dbReference type="InterPro" id="IPR006702">
    <property type="entry name" value="CASP_dom"/>
</dbReference>
<dbReference type="InterPro" id="IPR045009">
    <property type="entry name" value="CASPL-5"/>
</dbReference>
<dbReference type="PANTHER" id="PTHR32021:SF1">
    <property type="entry name" value="CASP-LIKE PROTEIN 5A1"/>
    <property type="match status" value="1"/>
</dbReference>
<dbReference type="PANTHER" id="PTHR32021">
    <property type="entry name" value="CASP-LIKE PROTEIN 5B3"/>
    <property type="match status" value="1"/>
</dbReference>
<dbReference type="Pfam" id="PF04535">
    <property type="entry name" value="CASP_dom"/>
    <property type="match status" value="1"/>
</dbReference>
<reference key="1">
    <citation type="journal article" date="2009" name="PLoS Genet.">
        <title>Sequencing, mapping, and analysis of 27,455 maize full-length cDNAs.</title>
        <authorList>
            <person name="Soderlund C."/>
            <person name="Descour A."/>
            <person name="Kudrna D."/>
            <person name="Bomhoff M."/>
            <person name="Boyd L."/>
            <person name="Currie J."/>
            <person name="Angelova A."/>
            <person name="Collura K."/>
            <person name="Wissotski M."/>
            <person name="Ashley E."/>
            <person name="Morrow D."/>
            <person name="Fernandes J."/>
            <person name="Walbot V."/>
            <person name="Yu Y."/>
        </authorList>
    </citation>
    <scope>NUCLEOTIDE SEQUENCE [LARGE SCALE MRNA]</scope>
    <source>
        <strain>cv. B73</strain>
    </source>
</reference>
<reference key="2">
    <citation type="journal article" date="2014" name="Plant Physiol.">
        <title>Functional and evolutionary analysis of the CASPARIAN STRIP MEMBRANE DOMAIN PROTEIN family.</title>
        <authorList>
            <person name="Roppolo D."/>
            <person name="Boeckmann B."/>
            <person name="Pfister A."/>
            <person name="Boutet E."/>
            <person name="Rubio M.C."/>
            <person name="Denervaud-Tendon V."/>
            <person name="Vermeer J.E."/>
            <person name="Gheyselinck J."/>
            <person name="Xenarios I."/>
            <person name="Geldner N."/>
        </authorList>
    </citation>
    <scope>GENE FAMILY</scope>
    <scope>NOMENCLATURE</scope>
</reference>
<feature type="chain" id="PRO_0000418705" description="CASP-like protein 5A1">
    <location>
        <begin position="1"/>
        <end position="181"/>
    </location>
</feature>
<feature type="topological domain" description="Cytoplasmic" evidence="2">
    <location>
        <begin position="1"/>
        <end position="38"/>
    </location>
</feature>
<feature type="transmembrane region" description="Helical" evidence="2">
    <location>
        <begin position="39"/>
        <end position="59"/>
    </location>
</feature>
<feature type="topological domain" description="Extracellular" evidence="2">
    <location>
        <begin position="60"/>
        <end position="77"/>
    </location>
</feature>
<feature type="transmembrane region" description="Helical" evidence="2">
    <location>
        <begin position="78"/>
        <end position="98"/>
    </location>
</feature>
<feature type="topological domain" description="Cytoplasmic" evidence="2">
    <location>
        <begin position="99"/>
        <end position="115"/>
    </location>
</feature>
<feature type="transmembrane region" description="Helical" evidence="2">
    <location>
        <begin position="116"/>
        <end position="136"/>
    </location>
</feature>
<feature type="topological domain" description="Extracellular" evidence="2">
    <location>
        <begin position="137"/>
        <end position="153"/>
    </location>
</feature>
<feature type="transmembrane region" description="Helical" evidence="2">
    <location>
        <begin position="154"/>
        <end position="174"/>
    </location>
</feature>
<feature type="topological domain" description="Cytoplasmic" evidence="2">
    <location>
        <begin position="175"/>
        <end position="181"/>
    </location>
</feature>
<feature type="sequence conflict" description="In Ref. 1; DR785323." evidence="3" ref="1">
    <original>L</original>
    <variation>F</variation>
    <location>
        <position position="49"/>
    </location>
</feature>
<feature type="sequence conflict" description="In Ref. 1; DR785323." evidence="3" ref="1">
    <original>QN</original>
    <variation>RI</variation>
    <location>
        <begin position="103"/>
        <end position="104"/>
    </location>
</feature>
<proteinExistence type="evidence at transcript level"/>
<name>CSPLO_MAIZE</name>
<accession>P0DI67</accession>
<comment type="subunit">
    <text evidence="1">Homodimer and heterodimers.</text>
</comment>
<comment type="subcellular location">
    <subcellularLocation>
        <location evidence="1">Cell membrane</location>
        <topology evidence="1">Multi-pass membrane protein</topology>
    </subcellularLocation>
</comment>
<comment type="similarity">
    <text evidence="3">Belongs to the Casparian strip membrane proteins (CASP) family.</text>
</comment>